<keyword id="KW-0687">Ribonucleoprotein</keyword>
<keyword id="KW-0689">Ribosomal protein</keyword>
<keyword id="KW-0694">RNA-binding</keyword>
<keyword id="KW-0699">rRNA-binding</keyword>
<gene>
    <name evidence="1" type="primary">rpsK</name>
    <name type="ordered locus">Shewana3_0222</name>
</gene>
<name>RS11_SHESA</name>
<reference key="1">
    <citation type="submission" date="2006-09" db="EMBL/GenBank/DDBJ databases">
        <title>Complete sequence of chromosome 1 of Shewanella sp. ANA-3.</title>
        <authorList>
            <person name="Copeland A."/>
            <person name="Lucas S."/>
            <person name="Lapidus A."/>
            <person name="Barry K."/>
            <person name="Detter J.C."/>
            <person name="Glavina del Rio T."/>
            <person name="Hammon N."/>
            <person name="Israni S."/>
            <person name="Dalin E."/>
            <person name="Tice H."/>
            <person name="Pitluck S."/>
            <person name="Chertkov O."/>
            <person name="Brettin T."/>
            <person name="Bruce D."/>
            <person name="Han C."/>
            <person name="Tapia R."/>
            <person name="Gilna P."/>
            <person name="Schmutz J."/>
            <person name="Larimer F."/>
            <person name="Land M."/>
            <person name="Hauser L."/>
            <person name="Kyrpides N."/>
            <person name="Kim E."/>
            <person name="Newman D."/>
            <person name="Salticov C."/>
            <person name="Konstantinidis K."/>
            <person name="Klappenback J."/>
            <person name="Tiedje J."/>
            <person name="Richardson P."/>
        </authorList>
    </citation>
    <scope>NUCLEOTIDE SEQUENCE [LARGE SCALE GENOMIC DNA]</scope>
    <source>
        <strain>ANA-3</strain>
    </source>
</reference>
<protein>
    <recommendedName>
        <fullName evidence="1">Small ribosomal subunit protein uS11</fullName>
    </recommendedName>
    <alternativeName>
        <fullName evidence="2">30S ribosomal protein S11</fullName>
    </alternativeName>
</protein>
<evidence type="ECO:0000255" key="1">
    <source>
        <dbReference type="HAMAP-Rule" id="MF_01310"/>
    </source>
</evidence>
<evidence type="ECO:0000305" key="2"/>
<proteinExistence type="inferred from homology"/>
<dbReference type="EMBL" id="CP000469">
    <property type="protein sequence ID" value="ABK46466.1"/>
    <property type="molecule type" value="Genomic_DNA"/>
</dbReference>
<dbReference type="RefSeq" id="WP_006083577.1">
    <property type="nucleotide sequence ID" value="NC_008577.1"/>
</dbReference>
<dbReference type="SMR" id="A0KRP7"/>
<dbReference type="STRING" id="94122.Shewana3_0222"/>
<dbReference type="GeneID" id="94726209"/>
<dbReference type="KEGG" id="shn:Shewana3_0222"/>
<dbReference type="eggNOG" id="COG0100">
    <property type="taxonomic scope" value="Bacteria"/>
</dbReference>
<dbReference type="HOGENOM" id="CLU_072439_5_0_6"/>
<dbReference type="OrthoDB" id="9806415at2"/>
<dbReference type="Proteomes" id="UP000002589">
    <property type="component" value="Chromosome"/>
</dbReference>
<dbReference type="GO" id="GO:1990904">
    <property type="term" value="C:ribonucleoprotein complex"/>
    <property type="evidence" value="ECO:0007669"/>
    <property type="project" value="UniProtKB-KW"/>
</dbReference>
<dbReference type="GO" id="GO:0005840">
    <property type="term" value="C:ribosome"/>
    <property type="evidence" value="ECO:0007669"/>
    <property type="project" value="UniProtKB-KW"/>
</dbReference>
<dbReference type="GO" id="GO:0019843">
    <property type="term" value="F:rRNA binding"/>
    <property type="evidence" value="ECO:0007669"/>
    <property type="project" value="UniProtKB-UniRule"/>
</dbReference>
<dbReference type="GO" id="GO:0003735">
    <property type="term" value="F:structural constituent of ribosome"/>
    <property type="evidence" value="ECO:0007669"/>
    <property type="project" value="InterPro"/>
</dbReference>
<dbReference type="GO" id="GO:0006412">
    <property type="term" value="P:translation"/>
    <property type="evidence" value="ECO:0007669"/>
    <property type="project" value="UniProtKB-UniRule"/>
</dbReference>
<dbReference type="FunFam" id="3.30.420.80:FF:000001">
    <property type="entry name" value="30S ribosomal protein S11"/>
    <property type="match status" value="1"/>
</dbReference>
<dbReference type="Gene3D" id="3.30.420.80">
    <property type="entry name" value="Ribosomal protein S11"/>
    <property type="match status" value="1"/>
</dbReference>
<dbReference type="HAMAP" id="MF_01310">
    <property type="entry name" value="Ribosomal_uS11"/>
    <property type="match status" value="1"/>
</dbReference>
<dbReference type="InterPro" id="IPR001971">
    <property type="entry name" value="Ribosomal_uS11"/>
</dbReference>
<dbReference type="InterPro" id="IPR019981">
    <property type="entry name" value="Ribosomal_uS11_bac-type"/>
</dbReference>
<dbReference type="InterPro" id="IPR018102">
    <property type="entry name" value="Ribosomal_uS11_CS"/>
</dbReference>
<dbReference type="InterPro" id="IPR036967">
    <property type="entry name" value="Ribosomal_uS11_sf"/>
</dbReference>
<dbReference type="NCBIfam" id="NF003698">
    <property type="entry name" value="PRK05309.1"/>
    <property type="match status" value="1"/>
</dbReference>
<dbReference type="NCBIfam" id="TIGR03632">
    <property type="entry name" value="uS11_bact"/>
    <property type="match status" value="1"/>
</dbReference>
<dbReference type="PANTHER" id="PTHR11759">
    <property type="entry name" value="40S RIBOSOMAL PROTEIN S14/30S RIBOSOMAL PROTEIN S11"/>
    <property type="match status" value="1"/>
</dbReference>
<dbReference type="Pfam" id="PF00411">
    <property type="entry name" value="Ribosomal_S11"/>
    <property type="match status" value="1"/>
</dbReference>
<dbReference type="PIRSF" id="PIRSF002131">
    <property type="entry name" value="Ribosomal_S11"/>
    <property type="match status" value="1"/>
</dbReference>
<dbReference type="SUPFAM" id="SSF53137">
    <property type="entry name" value="Translational machinery components"/>
    <property type="match status" value="1"/>
</dbReference>
<dbReference type="PROSITE" id="PS00054">
    <property type="entry name" value="RIBOSOMAL_S11"/>
    <property type="match status" value="1"/>
</dbReference>
<accession>A0KRP7</accession>
<organism>
    <name type="scientific">Shewanella sp. (strain ANA-3)</name>
    <dbReference type="NCBI Taxonomy" id="94122"/>
    <lineage>
        <taxon>Bacteria</taxon>
        <taxon>Pseudomonadati</taxon>
        <taxon>Pseudomonadota</taxon>
        <taxon>Gammaproteobacteria</taxon>
        <taxon>Alteromonadales</taxon>
        <taxon>Shewanellaceae</taxon>
        <taxon>Shewanella</taxon>
    </lineage>
</organism>
<sequence>MAKVPSRSPRKRVRKQVADGMAHIHASFNNTIVTITDRQGNALSWATSGGSGFRGSRKSTPFAAQVAAERAGAAAQDYGLKNLEVFVKGPGPGRESAIRALNAVGYKITNITDVTPIPHNGCRPPKKRRV</sequence>
<feature type="chain" id="PRO_0000294852" description="Small ribosomal subunit protein uS11">
    <location>
        <begin position="1"/>
        <end position="130"/>
    </location>
</feature>
<comment type="function">
    <text evidence="1">Located on the platform of the 30S subunit, it bridges several disparate RNA helices of the 16S rRNA. Forms part of the Shine-Dalgarno cleft in the 70S ribosome.</text>
</comment>
<comment type="subunit">
    <text evidence="1">Part of the 30S ribosomal subunit. Interacts with proteins S7 and S18. Binds to IF-3.</text>
</comment>
<comment type="similarity">
    <text evidence="1">Belongs to the universal ribosomal protein uS11 family.</text>
</comment>